<accession>Q47KG0</accession>
<dbReference type="EMBL" id="CP000088">
    <property type="protein sequence ID" value="AAZ57062.1"/>
    <property type="status" value="ALT_INIT"/>
    <property type="molecule type" value="Genomic_DNA"/>
</dbReference>
<dbReference type="RefSeq" id="WP_016189422.1">
    <property type="nucleotide sequence ID" value="NC_007333.1"/>
</dbReference>
<dbReference type="SMR" id="Q47KG0"/>
<dbReference type="STRING" id="269800.Tfu_3029"/>
<dbReference type="KEGG" id="tfu:Tfu_3029"/>
<dbReference type="eggNOG" id="COG0239">
    <property type="taxonomic scope" value="Bacteria"/>
</dbReference>
<dbReference type="HOGENOM" id="CLU_114342_2_1_11"/>
<dbReference type="OrthoDB" id="5148600at2"/>
<dbReference type="GO" id="GO:0005886">
    <property type="term" value="C:plasma membrane"/>
    <property type="evidence" value="ECO:0007669"/>
    <property type="project" value="UniProtKB-SubCell"/>
</dbReference>
<dbReference type="GO" id="GO:0062054">
    <property type="term" value="F:fluoride channel activity"/>
    <property type="evidence" value="ECO:0007669"/>
    <property type="project" value="UniProtKB-UniRule"/>
</dbReference>
<dbReference type="GO" id="GO:0046872">
    <property type="term" value="F:metal ion binding"/>
    <property type="evidence" value="ECO:0007669"/>
    <property type="project" value="UniProtKB-KW"/>
</dbReference>
<dbReference type="GO" id="GO:0140114">
    <property type="term" value="P:cellular detoxification of fluoride"/>
    <property type="evidence" value="ECO:0007669"/>
    <property type="project" value="UniProtKB-UniRule"/>
</dbReference>
<dbReference type="HAMAP" id="MF_00454">
    <property type="entry name" value="FluC"/>
    <property type="match status" value="1"/>
</dbReference>
<dbReference type="InterPro" id="IPR003691">
    <property type="entry name" value="FluC"/>
</dbReference>
<dbReference type="PANTHER" id="PTHR28259">
    <property type="entry name" value="FLUORIDE EXPORT PROTEIN 1-RELATED"/>
    <property type="match status" value="1"/>
</dbReference>
<dbReference type="PANTHER" id="PTHR28259:SF1">
    <property type="entry name" value="FLUORIDE EXPORT PROTEIN 1-RELATED"/>
    <property type="match status" value="1"/>
</dbReference>
<dbReference type="Pfam" id="PF02537">
    <property type="entry name" value="CRCB"/>
    <property type="match status" value="1"/>
</dbReference>
<comment type="function">
    <text evidence="1">Fluoride-specific ion channel. Important for reducing fluoride concentration in the cell, thus reducing its toxicity.</text>
</comment>
<comment type="catalytic activity">
    <reaction evidence="1">
        <text>fluoride(in) = fluoride(out)</text>
        <dbReference type="Rhea" id="RHEA:76159"/>
        <dbReference type="ChEBI" id="CHEBI:17051"/>
    </reaction>
    <physiologicalReaction direction="left-to-right" evidence="1">
        <dbReference type="Rhea" id="RHEA:76160"/>
    </physiologicalReaction>
</comment>
<comment type="activity regulation">
    <text evidence="1">Na(+) is not transported, but it plays an essential structural role and its presence is essential for fluoride channel function.</text>
</comment>
<comment type="subcellular location">
    <subcellularLocation>
        <location evidence="1">Cell membrane</location>
        <topology evidence="1">Multi-pass membrane protein</topology>
    </subcellularLocation>
</comment>
<comment type="similarity">
    <text evidence="1">Belongs to the fluoride channel Fluc/FEX (TC 1.A.43) family.</text>
</comment>
<comment type="sequence caution" evidence="2">
    <conflict type="erroneous initiation">
        <sequence resource="EMBL-CDS" id="AAZ57062"/>
    </conflict>
</comment>
<gene>
    <name evidence="1" type="primary">fluC1</name>
    <name evidence="1" type="synonym">crcB1</name>
    <name type="ordered locus">Tfu_3029</name>
</gene>
<feature type="chain" id="PRO_0000252955" description="Fluoride-specific ion channel FluC 1">
    <location>
        <begin position="1"/>
        <end position="120"/>
    </location>
</feature>
<feature type="transmembrane region" description="Helical" evidence="1">
    <location>
        <begin position="3"/>
        <end position="23"/>
    </location>
</feature>
<feature type="transmembrane region" description="Helical" evidence="1">
    <location>
        <begin position="42"/>
        <end position="62"/>
    </location>
</feature>
<feature type="transmembrane region" description="Helical" evidence="1">
    <location>
        <begin position="99"/>
        <end position="119"/>
    </location>
</feature>
<feature type="binding site" evidence="1">
    <location>
        <position position="69"/>
    </location>
    <ligand>
        <name>Na(+)</name>
        <dbReference type="ChEBI" id="CHEBI:29101"/>
        <note>structural</note>
    </ligand>
</feature>
<feature type="binding site" evidence="1">
    <location>
        <position position="72"/>
    </location>
    <ligand>
        <name>Na(+)</name>
        <dbReference type="ChEBI" id="CHEBI:29101"/>
        <note>structural</note>
    </ligand>
</feature>
<protein>
    <recommendedName>
        <fullName evidence="1">Fluoride-specific ion channel FluC 1</fullName>
    </recommendedName>
</protein>
<proteinExistence type="inferred from homology"/>
<organism>
    <name type="scientific">Thermobifida fusca (strain YX)</name>
    <dbReference type="NCBI Taxonomy" id="269800"/>
    <lineage>
        <taxon>Bacteria</taxon>
        <taxon>Bacillati</taxon>
        <taxon>Actinomycetota</taxon>
        <taxon>Actinomycetes</taxon>
        <taxon>Streptosporangiales</taxon>
        <taxon>Nocardiopsidaceae</taxon>
        <taxon>Thermobifida</taxon>
    </lineage>
</organism>
<name>FLUC1_THEFY</name>
<sequence length="120" mass="12014">MTALLTAVGAAFGALLRYCLNCAAAARGTTGFPWGTWCVNTLGCLLAGALAALPLPAAVAALAGPGLCGGLTTYSTFSYETVRLLAERKWTHALGNIGANLAAGVGAAVLGMAAVGWFLR</sequence>
<evidence type="ECO:0000255" key="1">
    <source>
        <dbReference type="HAMAP-Rule" id="MF_00454"/>
    </source>
</evidence>
<evidence type="ECO:0000305" key="2"/>
<keyword id="KW-1003">Cell membrane</keyword>
<keyword id="KW-0407">Ion channel</keyword>
<keyword id="KW-0406">Ion transport</keyword>
<keyword id="KW-0472">Membrane</keyword>
<keyword id="KW-0479">Metal-binding</keyword>
<keyword id="KW-0915">Sodium</keyword>
<keyword id="KW-0812">Transmembrane</keyword>
<keyword id="KW-1133">Transmembrane helix</keyword>
<keyword id="KW-0813">Transport</keyword>
<reference key="1">
    <citation type="journal article" date="2007" name="J. Bacteriol.">
        <title>Genome sequence and analysis of the soil cellulolytic actinomycete Thermobifida fusca YX.</title>
        <authorList>
            <person name="Lykidis A."/>
            <person name="Mavromatis K."/>
            <person name="Ivanova N."/>
            <person name="Anderson I."/>
            <person name="Land M."/>
            <person name="DiBartolo G."/>
            <person name="Martinez M."/>
            <person name="Lapidus A."/>
            <person name="Lucas S."/>
            <person name="Copeland A."/>
            <person name="Richardson P."/>
            <person name="Wilson D.B."/>
            <person name="Kyrpides N."/>
        </authorList>
    </citation>
    <scope>NUCLEOTIDE SEQUENCE [LARGE SCALE GENOMIC DNA]</scope>
    <source>
        <strain>YX</strain>
    </source>
</reference>